<comment type="function">
    <text evidence="1">The beta subunit is responsible for the synthesis of L-tryptophan from indole and L-serine.</text>
</comment>
<comment type="catalytic activity">
    <reaction evidence="1">
        <text>(1S,2R)-1-C-(indol-3-yl)glycerol 3-phosphate + L-serine = D-glyceraldehyde 3-phosphate + L-tryptophan + H2O</text>
        <dbReference type="Rhea" id="RHEA:10532"/>
        <dbReference type="ChEBI" id="CHEBI:15377"/>
        <dbReference type="ChEBI" id="CHEBI:33384"/>
        <dbReference type="ChEBI" id="CHEBI:57912"/>
        <dbReference type="ChEBI" id="CHEBI:58866"/>
        <dbReference type="ChEBI" id="CHEBI:59776"/>
        <dbReference type="EC" id="4.2.1.20"/>
    </reaction>
</comment>
<comment type="cofactor">
    <cofactor evidence="1">
        <name>pyridoxal 5'-phosphate</name>
        <dbReference type="ChEBI" id="CHEBI:597326"/>
    </cofactor>
</comment>
<comment type="pathway">
    <text evidence="1">Amino-acid biosynthesis; L-tryptophan biosynthesis; L-tryptophan from chorismate: step 5/5.</text>
</comment>
<comment type="subunit">
    <text evidence="1">Tetramer of two alpha and two beta chains.</text>
</comment>
<comment type="similarity">
    <text evidence="1">Belongs to the TrpB family.</text>
</comment>
<name>TRPB_ECO55</name>
<gene>
    <name evidence="1" type="primary">trpB</name>
    <name type="ordered locus">EC55989_1419</name>
</gene>
<accession>B7L493</accession>
<feature type="chain" id="PRO_1000198743" description="Tryptophan synthase beta chain">
    <location>
        <begin position="1"/>
        <end position="397"/>
    </location>
</feature>
<feature type="modified residue" description="N6-(pyridoxal phosphate)lysine" evidence="1">
    <location>
        <position position="87"/>
    </location>
</feature>
<evidence type="ECO:0000255" key="1">
    <source>
        <dbReference type="HAMAP-Rule" id="MF_00133"/>
    </source>
</evidence>
<organism>
    <name type="scientific">Escherichia coli (strain 55989 / EAEC)</name>
    <dbReference type="NCBI Taxonomy" id="585055"/>
    <lineage>
        <taxon>Bacteria</taxon>
        <taxon>Pseudomonadati</taxon>
        <taxon>Pseudomonadota</taxon>
        <taxon>Gammaproteobacteria</taxon>
        <taxon>Enterobacterales</taxon>
        <taxon>Enterobacteriaceae</taxon>
        <taxon>Escherichia</taxon>
    </lineage>
</organism>
<keyword id="KW-0028">Amino-acid biosynthesis</keyword>
<keyword id="KW-0057">Aromatic amino acid biosynthesis</keyword>
<keyword id="KW-0456">Lyase</keyword>
<keyword id="KW-0663">Pyridoxal phosphate</keyword>
<keyword id="KW-1185">Reference proteome</keyword>
<keyword id="KW-0822">Tryptophan biosynthesis</keyword>
<sequence>MTTLLNPYFGEFGGMYVPQILMPALRQLEEAFVSAQKDPEFQAQFNDLLKNYAGRPTALTKCQNITAGTNTTLYLKREDLLHGGAHKTNQVLGQALLAKRMGKTEIIAETGAGQHGVASALASALLGLKCRIYMGAKDVERQSPNVFRMRLMGAEVIPVHSGSATLKDACNEALRDWSGSYETAHYMLGTAAGPHPYPTIVREFQRMIGEETKAQILEREGRLPDAVIACVGGGSNAIGMFADFINETNVGLIGVEPGGHGIETGEHGAPLKHGRVGIYFGMKAPMMQTEDGQIEESYSISAGLDFPSVGPQHAYLNSTGRADYVSITDDEALEAFKTLCLHEGIIPALESSHALAHALKMMRENPDKEQLLVVNLSGRGDKDIFTVHDILKARGEI</sequence>
<dbReference type="EC" id="4.2.1.20" evidence="1"/>
<dbReference type="EMBL" id="CU928145">
    <property type="protein sequence ID" value="CAU97276.1"/>
    <property type="molecule type" value="Genomic_DNA"/>
</dbReference>
<dbReference type="RefSeq" id="WP_000209520.1">
    <property type="nucleotide sequence ID" value="NC_011748.1"/>
</dbReference>
<dbReference type="SMR" id="B7L493"/>
<dbReference type="GeneID" id="75203373"/>
<dbReference type="KEGG" id="eck:EC55989_1419"/>
<dbReference type="HOGENOM" id="CLU_016734_3_1_6"/>
<dbReference type="UniPathway" id="UPA00035">
    <property type="reaction ID" value="UER00044"/>
</dbReference>
<dbReference type="Proteomes" id="UP000000746">
    <property type="component" value="Chromosome"/>
</dbReference>
<dbReference type="GO" id="GO:0005737">
    <property type="term" value="C:cytoplasm"/>
    <property type="evidence" value="ECO:0007669"/>
    <property type="project" value="TreeGrafter"/>
</dbReference>
<dbReference type="GO" id="GO:0004834">
    <property type="term" value="F:tryptophan synthase activity"/>
    <property type="evidence" value="ECO:0007669"/>
    <property type="project" value="UniProtKB-UniRule"/>
</dbReference>
<dbReference type="CDD" id="cd06446">
    <property type="entry name" value="Trp-synth_B"/>
    <property type="match status" value="1"/>
</dbReference>
<dbReference type="FunFam" id="3.40.50.1100:FF:000001">
    <property type="entry name" value="Tryptophan synthase beta chain"/>
    <property type="match status" value="1"/>
</dbReference>
<dbReference type="FunFam" id="3.40.50.1100:FF:000004">
    <property type="entry name" value="Tryptophan synthase beta chain"/>
    <property type="match status" value="1"/>
</dbReference>
<dbReference type="Gene3D" id="3.40.50.1100">
    <property type="match status" value="2"/>
</dbReference>
<dbReference type="HAMAP" id="MF_00133">
    <property type="entry name" value="Trp_synth_beta"/>
    <property type="match status" value="1"/>
</dbReference>
<dbReference type="InterPro" id="IPR006653">
    <property type="entry name" value="Trp_synth_b_CS"/>
</dbReference>
<dbReference type="InterPro" id="IPR006654">
    <property type="entry name" value="Trp_synth_beta"/>
</dbReference>
<dbReference type="InterPro" id="IPR023026">
    <property type="entry name" value="Trp_synth_beta/beta-like"/>
</dbReference>
<dbReference type="InterPro" id="IPR001926">
    <property type="entry name" value="TrpB-like_PALP"/>
</dbReference>
<dbReference type="InterPro" id="IPR036052">
    <property type="entry name" value="TrpB-like_PALP_sf"/>
</dbReference>
<dbReference type="NCBIfam" id="TIGR00263">
    <property type="entry name" value="trpB"/>
    <property type="match status" value="1"/>
</dbReference>
<dbReference type="PANTHER" id="PTHR48077:SF3">
    <property type="entry name" value="TRYPTOPHAN SYNTHASE"/>
    <property type="match status" value="1"/>
</dbReference>
<dbReference type="PANTHER" id="PTHR48077">
    <property type="entry name" value="TRYPTOPHAN SYNTHASE-RELATED"/>
    <property type="match status" value="1"/>
</dbReference>
<dbReference type="Pfam" id="PF00291">
    <property type="entry name" value="PALP"/>
    <property type="match status" value="1"/>
</dbReference>
<dbReference type="PIRSF" id="PIRSF001413">
    <property type="entry name" value="Trp_syn_beta"/>
    <property type="match status" value="1"/>
</dbReference>
<dbReference type="SUPFAM" id="SSF53686">
    <property type="entry name" value="Tryptophan synthase beta subunit-like PLP-dependent enzymes"/>
    <property type="match status" value="1"/>
</dbReference>
<dbReference type="PROSITE" id="PS00168">
    <property type="entry name" value="TRP_SYNTHASE_BETA"/>
    <property type="match status" value="1"/>
</dbReference>
<protein>
    <recommendedName>
        <fullName evidence="1">Tryptophan synthase beta chain</fullName>
        <ecNumber evidence="1">4.2.1.20</ecNumber>
    </recommendedName>
</protein>
<proteinExistence type="inferred from homology"/>
<reference key="1">
    <citation type="journal article" date="2009" name="PLoS Genet.">
        <title>Organised genome dynamics in the Escherichia coli species results in highly diverse adaptive paths.</title>
        <authorList>
            <person name="Touchon M."/>
            <person name="Hoede C."/>
            <person name="Tenaillon O."/>
            <person name="Barbe V."/>
            <person name="Baeriswyl S."/>
            <person name="Bidet P."/>
            <person name="Bingen E."/>
            <person name="Bonacorsi S."/>
            <person name="Bouchier C."/>
            <person name="Bouvet O."/>
            <person name="Calteau A."/>
            <person name="Chiapello H."/>
            <person name="Clermont O."/>
            <person name="Cruveiller S."/>
            <person name="Danchin A."/>
            <person name="Diard M."/>
            <person name="Dossat C."/>
            <person name="Karoui M.E."/>
            <person name="Frapy E."/>
            <person name="Garry L."/>
            <person name="Ghigo J.M."/>
            <person name="Gilles A.M."/>
            <person name="Johnson J."/>
            <person name="Le Bouguenec C."/>
            <person name="Lescat M."/>
            <person name="Mangenot S."/>
            <person name="Martinez-Jehanne V."/>
            <person name="Matic I."/>
            <person name="Nassif X."/>
            <person name="Oztas S."/>
            <person name="Petit M.A."/>
            <person name="Pichon C."/>
            <person name="Rouy Z."/>
            <person name="Ruf C.S."/>
            <person name="Schneider D."/>
            <person name="Tourret J."/>
            <person name="Vacherie B."/>
            <person name="Vallenet D."/>
            <person name="Medigue C."/>
            <person name="Rocha E.P.C."/>
            <person name="Denamur E."/>
        </authorList>
    </citation>
    <scope>NUCLEOTIDE SEQUENCE [LARGE SCALE GENOMIC DNA]</scope>
    <source>
        <strain>55989 / EAEC</strain>
    </source>
</reference>